<accession>P31798</accession>
<evidence type="ECO:0000256" key="1">
    <source>
        <dbReference type="SAM" id="MobiDB-lite"/>
    </source>
</evidence>
<evidence type="ECO:0000305" key="2"/>
<protein>
    <recommendedName>
        <fullName>Coat protein</fullName>
    </recommendedName>
    <alternativeName>
        <fullName>Capsid protein</fullName>
        <shortName>CP</shortName>
    </alternativeName>
</protein>
<proteinExistence type="evidence at transcript level"/>
<organism>
    <name type="scientific">Potato virus X (strain UK3)</name>
    <name type="common">PVX</name>
    <dbReference type="NCBI Taxonomy" id="31726"/>
    <lineage>
        <taxon>Viruses</taxon>
        <taxon>Riboviria</taxon>
        <taxon>Orthornavirae</taxon>
        <taxon>Kitrinoviricota</taxon>
        <taxon>Alsuviricetes</taxon>
        <taxon>Tymovirales</taxon>
        <taxon>Alphaflexiviridae</taxon>
        <taxon>Potexvirus</taxon>
        <taxon>Potato virus X</taxon>
    </lineage>
</organism>
<sequence>MSAPASTTQPIGSTTSTTTKTAGATPATASGLFTIPDGDFFSTARAIVASNAVATNEDLSKIEAIWKDMKVPTDTMAQAAWDLVRHCADVGSSAQTEMIDTGPYSNGISRARLAAAIKEVCTLRQFCMKYAPVVWNWMLTNNSPPANWQAQGFKPEHKFAAFDFFNGVTNPAAIMPKEGLIRPPSEAEMNAAQTAAFVKITKARAQSNDFASLDAAVTRGRITGTTTAEAVVTLPPP</sequence>
<reference key="1">
    <citation type="journal article" date="1992" name="Virology">
        <title>Molecular analysis of a resistance-breaking strain of potato virus X.</title>
        <authorList>
            <person name="Kavanagh T."/>
            <person name="Goulden M."/>
            <person name="Santa Cruz S."/>
            <person name="Chapman S."/>
            <person name="Barker I."/>
            <person name="Baulcombe D."/>
        </authorList>
    </citation>
    <scope>NUCLEOTIDE SEQUENCE [MRNA]</scope>
</reference>
<reference key="2">
    <citation type="journal article" date="2005" name="Mol. Plant Microbe Interact.">
        <title>A new cell-to-cell transport model for Potexviruses.</title>
        <authorList>
            <person name="Verchot-Lubicz J."/>
        </authorList>
    </citation>
    <scope>REVIEW</scope>
</reference>
<comment type="function">
    <text>Required for genome encapsidation. Forms ribonucleoprotein complexes along with TGB1 helicase and viral RNA.</text>
</comment>
<comment type="subcellular location">
    <subcellularLocation>
        <location evidence="2">Virion</location>
    </subcellularLocation>
</comment>
<comment type="similarity">
    <text evidence="2">Belongs to the potexvirus capsid protein family.</text>
</comment>
<name>CAPSD_PVXU3</name>
<feature type="chain" id="PRO_0000222627" description="Coat protein">
    <location>
        <begin position="1"/>
        <end position="237"/>
    </location>
</feature>
<feature type="region of interest" description="Disordered" evidence="1">
    <location>
        <begin position="1"/>
        <end position="24"/>
    </location>
</feature>
<dbReference type="EMBL" id="M95516">
    <property type="protein sequence ID" value="AAA03493.1"/>
    <property type="molecule type" value="mRNA"/>
</dbReference>
<dbReference type="PIR" id="A42993">
    <property type="entry name" value="VCWGPX"/>
</dbReference>
<dbReference type="SMR" id="P31798"/>
<dbReference type="GO" id="GO:0019029">
    <property type="term" value="C:helical viral capsid"/>
    <property type="evidence" value="ECO:0007669"/>
    <property type="project" value="UniProtKB-KW"/>
</dbReference>
<dbReference type="GO" id="GO:1990904">
    <property type="term" value="C:ribonucleoprotein complex"/>
    <property type="evidence" value="ECO:0007669"/>
    <property type="project" value="UniProtKB-KW"/>
</dbReference>
<dbReference type="GO" id="GO:0005198">
    <property type="term" value="F:structural molecule activity"/>
    <property type="evidence" value="ECO:0007669"/>
    <property type="project" value="InterPro"/>
</dbReference>
<dbReference type="InterPro" id="IPR000052">
    <property type="entry name" value="Pltvir_coat"/>
</dbReference>
<dbReference type="Pfam" id="PF00286">
    <property type="entry name" value="Flexi_CP"/>
    <property type="match status" value="1"/>
</dbReference>
<dbReference type="PRINTS" id="PR00232">
    <property type="entry name" value="POTXCARLCOAT"/>
</dbReference>
<dbReference type="PROSITE" id="PS00418">
    <property type="entry name" value="POTEX_CARLAVIRUS_COAT"/>
    <property type="match status" value="1"/>
</dbReference>
<organismHost>
    <name type="scientific">Brassica campestris</name>
    <name type="common">Field mustard</name>
    <dbReference type="NCBI Taxonomy" id="3711"/>
</organismHost>
<organismHost>
    <name type="scientific">Solanum tuberosum</name>
    <name type="common">Potato</name>
    <dbReference type="NCBI Taxonomy" id="4113"/>
</organismHost>
<keyword id="KW-0167">Capsid protein</keyword>
<keyword id="KW-1139">Helical capsid protein</keyword>
<keyword id="KW-0687">Ribonucleoprotein</keyword>
<keyword id="KW-0946">Virion</keyword>